<feature type="initiator methionine" description="Removed" evidence="2">
    <location>
        <position position="1"/>
    </location>
</feature>
<feature type="chain" id="PRO_0000248312" description="Endoplasmic reticulum junction formation protein lunapark">
    <location>
        <begin position="2"/>
        <end position="428"/>
    </location>
</feature>
<feature type="topological domain" description="Cytoplasmic" evidence="2">
    <location>
        <begin position="2"/>
        <end position="45"/>
    </location>
</feature>
<feature type="transmembrane region" description="Helical" evidence="3">
    <location>
        <begin position="46"/>
        <end position="66"/>
    </location>
</feature>
<feature type="topological domain" description="Lumenal" evidence="2">
    <location>
        <begin position="67"/>
        <end position="77"/>
    </location>
</feature>
<feature type="transmembrane region" description="Helical" evidence="3">
    <location>
        <begin position="78"/>
        <end position="98"/>
    </location>
</feature>
<feature type="topological domain" description="Cytoplasmic" evidence="2">
    <location>
        <begin position="99"/>
        <end position="428"/>
    </location>
</feature>
<feature type="zinc finger region" description="C4-type; plays a role in ER morphology" evidence="2">
    <location>
        <begin position="276"/>
        <end position="301"/>
    </location>
</feature>
<feature type="region of interest" description="Disordered" evidence="4">
    <location>
        <begin position="143"/>
        <end position="248"/>
    </location>
</feature>
<feature type="region of interest" description="Disordered" evidence="4">
    <location>
        <begin position="361"/>
        <end position="428"/>
    </location>
</feature>
<feature type="coiled-coil region" evidence="3">
    <location>
        <begin position="16"/>
        <end position="43"/>
    </location>
</feature>
<feature type="coiled-coil region" evidence="3">
    <location>
        <begin position="102"/>
        <end position="128"/>
    </location>
</feature>
<feature type="compositionally biased region" description="Pro residues" evidence="4">
    <location>
        <begin position="185"/>
        <end position="198"/>
    </location>
</feature>
<feature type="compositionally biased region" description="Acidic residues" evidence="4">
    <location>
        <begin position="386"/>
        <end position="401"/>
    </location>
</feature>
<feature type="modified residue" description="Phosphoserine" evidence="2">
    <location>
        <position position="114"/>
    </location>
</feature>
<feature type="modified residue" description="Phosphoserine" evidence="2">
    <location>
        <position position="153"/>
    </location>
</feature>
<feature type="modified residue" description="Phosphoserine" evidence="2">
    <location>
        <position position="177"/>
    </location>
</feature>
<feature type="modified residue" description="Phosphoserine" evidence="2">
    <location>
        <position position="182"/>
    </location>
</feature>
<feature type="modified residue" description="Phosphoserine" evidence="2">
    <location>
        <position position="194"/>
    </location>
</feature>
<feature type="modified residue" description="Phosphothreonine" evidence="2">
    <location>
        <position position="211"/>
    </location>
</feature>
<feature type="modified residue" description="Phosphothreonine" evidence="2">
    <location>
        <position position="213"/>
    </location>
</feature>
<feature type="modified residue" description="Phosphoserine" evidence="2">
    <location>
        <position position="217"/>
    </location>
</feature>
<feature type="modified residue" description="Phosphoserine" evidence="2">
    <location>
        <position position="227"/>
    </location>
</feature>
<feature type="modified residue" description="Phosphoserine" evidence="2">
    <location>
        <position position="321"/>
    </location>
</feature>
<feature type="modified residue" description="Phosphoserine" evidence="2">
    <location>
        <position position="353"/>
    </location>
</feature>
<feature type="modified residue" description="Phosphoserine" evidence="2">
    <location>
        <position position="384"/>
    </location>
</feature>
<feature type="modified residue" description="Phosphoserine" evidence="1">
    <location>
        <position position="414"/>
    </location>
</feature>
<feature type="lipid moiety-binding region" description="N-myristoyl glycine" evidence="2">
    <location>
        <position position="2"/>
    </location>
</feature>
<feature type="splice variant" id="VSP_020240" description="In isoform 2." evidence="5">
    <location>
        <begin position="236"/>
        <end position="240"/>
    </location>
</feature>
<feature type="sequence conflict" description="In Ref. 1; CAH90715." evidence="6" ref="1">
    <original>L</original>
    <variation>P</variation>
    <location>
        <position position="12"/>
    </location>
</feature>
<feature type="sequence conflict" description="In Ref. 1; CAH90715." evidence="6" ref="1">
    <original>R</original>
    <variation>W</variation>
    <location>
        <position position="42"/>
    </location>
</feature>
<feature type="sequence conflict" description="In Ref. 1; CAH90715." evidence="6" ref="1">
    <original>A</original>
    <variation>T</variation>
    <location>
        <position position="427"/>
    </location>
</feature>
<sequence length="428" mass="47729">MGGLFSRWRTKLSTVEVLESIDKEIQALEEFREKNQRLQKLRVGRLILYSSVLYLFTCLIVYLWYLPDEFTARLAMTLPFFAFPLIIWSIRTVIIFFFSKRTERNNEALDDLKSQRKKILEEVMEKETYKTAKLILERFDPDSKKAKECEPPSAGGAVTARPGQEIRQRTAAQRNLSPTPASPNQGPPPQVPVSPGPPKDSSAPGGPPERTVTPALSSNVLPRHLGSPATSVPGMGLHPPGPPLARPILPRERGALDRIVEYLVGDGPQNRYALICQQCFSHNGMALKEEFEYIAFRCAYCFFLNPARKTRPQAPRLPEFSFEKRQVVEGSSSVGPLPSGSVLSSDNQFNEESLEQDVLDNNTEQTDDKIPATEQTNQVIEKASDSEEPEEKQETENEEASVIETNSTVPGADSIPDPELNGESLTAE</sequence>
<proteinExistence type="evidence at transcript level"/>
<protein>
    <recommendedName>
        <fullName evidence="6">Endoplasmic reticulum junction formation protein lunapark</fullName>
    </recommendedName>
    <alternativeName>
        <fullName evidence="2">ER junction formation factor lunapark</fullName>
    </alternativeName>
</protein>
<accession>Q5R891</accession>
<accession>Q5RBZ5</accession>
<gene>
    <name evidence="2" type="primary">LNPK</name>
    <name type="synonym">LNP</name>
</gene>
<organism>
    <name type="scientific">Pongo abelii</name>
    <name type="common">Sumatran orangutan</name>
    <name type="synonym">Pongo pygmaeus abelii</name>
    <dbReference type="NCBI Taxonomy" id="9601"/>
    <lineage>
        <taxon>Eukaryota</taxon>
        <taxon>Metazoa</taxon>
        <taxon>Chordata</taxon>
        <taxon>Craniata</taxon>
        <taxon>Vertebrata</taxon>
        <taxon>Euteleostomi</taxon>
        <taxon>Mammalia</taxon>
        <taxon>Eutheria</taxon>
        <taxon>Euarchontoglires</taxon>
        <taxon>Primates</taxon>
        <taxon>Haplorrhini</taxon>
        <taxon>Catarrhini</taxon>
        <taxon>Hominidae</taxon>
        <taxon>Pongo</taxon>
    </lineage>
</organism>
<evidence type="ECO:0000250" key="1">
    <source>
        <dbReference type="UniProtKB" id="Q7TQ95"/>
    </source>
</evidence>
<evidence type="ECO:0000250" key="2">
    <source>
        <dbReference type="UniProtKB" id="Q9C0E8"/>
    </source>
</evidence>
<evidence type="ECO:0000255" key="3"/>
<evidence type="ECO:0000256" key="4">
    <source>
        <dbReference type="SAM" id="MobiDB-lite"/>
    </source>
</evidence>
<evidence type="ECO:0000303" key="5">
    <source ref="1"/>
</evidence>
<evidence type="ECO:0000305" key="6"/>
<dbReference type="EMBL" id="CR858487">
    <property type="protein sequence ID" value="CAH90715.1"/>
    <property type="molecule type" value="mRNA"/>
</dbReference>
<dbReference type="EMBL" id="CR859863">
    <property type="protein sequence ID" value="CAH92019.1"/>
    <property type="molecule type" value="mRNA"/>
</dbReference>
<dbReference type="RefSeq" id="NP_001126172.1">
    <property type="nucleotide sequence ID" value="NM_001132700.1"/>
</dbReference>
<dbReference type="FunCoup" id="Q5R891">
    <property type="interactions" value="2598"/>
</dbReference>
<dbReference type="STRING" id="9601.ENSPPYP00000014463"/>
<dbReference type="GeneID" id="100173134"/>
<dbReference type="KEGG" id="pon:100173134"/>
<dbReference type="CTD" id="80856"/>
<dbReference type="eggNOG" id="KOG2846">
    <property type="taxonomic scope" value="Eukaryota"/>
</dbReference>
<dbReference type="InParanoid" id="Q5R891"/>
<dbReference type="OrthoDB" id="1725934at2759"/>
<dbReference type="Proteomes" id="UP000001595">
    <property type="component" value="Unplaced"/>
</dbReference>
<dbReference type="GO" id="GO:0005789">
    <property type="term" value="C:endoplasmic reticulum membrane"/>
    <property type="evidence" value="ECO:0000250"/>
    <property type="project" value="UniProtKB"/>
</dbReference>
<dbReference type="GO" id="GO:0098826">
    <property type="term" value="C:endoplasmic reticulum tubular network membrane"/>
    <property type="evidence" value="ECO:0000250"/>
    <property type="project" value="UniProtKB"/>
</dbReference>
<dbReference type="GO" id="GO:0042802">
    <property type="term" value="F:identical protein binding"/>
    <property type="evidence" value="ECO:0000250"/>
    <property type="project" value="UniProtKB"/>
</dbReference>
<dbReference type="GO" id="GO:0008270">
    <property type="term" value="F:zinc ion binding"/>
    <property type="evidence" value="ECO:0007669"/>
    <property type="project" value="UniProtKB-KW"/>
</dbReference>
<dbReference type="GO" id="GO:0071788">
    <property type="term" value="P:endoplasmic reticulum tubular network maintenance"/>
    <property type="evidence" value="ECO:0000250"/>
    <property type="project" value="UniProtKB"/>
</dbReference>
<dbReference type="GO" id="GO:1903373">
    <property type="term" value="P:positive regulation of endoplasmic reticulum tubular network organization"/>
    <property type="evidence" value="ECO:0000250"/>
    <property type="project" value="UniProtKB"/>
</dbReference>
<dbReference type="InterPro" id="IPR040115">
    <property type="entry name" value="Lnp"/>
</dbReference>
<dbReference type="InterPro" id="IPR019273">
    <property type="entry name" value="Lunapark_Znf"/>
</dbReference>
<dbReference type="PANTHER" id="PTHR22166">
    <property type="entry name" value="ENDOPLASMIC RETICULUM JUNCTION FORMATION PROTEIN LUNAPARK"/>
    <property type="match status" value="1"/>
</dbReference>
<dbReference type="PANTHER" id="PTHR22166:SF12">
    <property type="entry name" value="ENDOPLASMIC RETICULUM JUNCTION FORMATION PROTEIN LUNAPARK"/>
    <property type="match status" value="1"/>
</dbReference>
<dbReference type="Pfam" id="PF10058">
    <property type="entry name" value="Zn_ribbon_10"/>
    <property type="match status" value="1"/>
</dbReference>
<reference key="1">
    <citation type="submission" date="2004-11" db="EMBL/GenBank/DDBJ databases">
        <authorList>
            <consortium name="The German cDNA consortium"/>
        </authorList>
    </citation>
    <scope>NUCLEOTIDE SEQUENCE [LARGE SCALE MRNA] (ISOFORMS 1 AND 2)</scope>
    <source>
        <tissue>Kidney</tissue>
    </source>
</reference>
<comment type="function">
    <text evidence="1 2">Endoplasmic reticulum (ER)-shaping membrane protein that plays a role in determining ER morphology. Involved in the stabilization of nascent three-way ER tubular junctions within the ER network. May also play a role as a curvature-stabilizing protein within three-way ER tubular junction network. May be involved in limb and central nervous system development.</text>
</comment>
<comment type="subunit">
    <text evidence="2">Homodimer; homodimerization requires the C4-type zinc finger motif and decreases during mitosis in a phosphorylation-dependent manner.</text>
</comment>
<comment type="subcellular location">
    <subcellularLocation>
        <location evidence="2">Endoplasmic reticulum membrane</location>
        <topology evidence="2">Multi-pass membrane protein</topology>
        <orientation evidence="2">Cytoplasmic side</orientation>
    </subcellularLocation>
    <text evidence="2">Localizes at endoplasmic reticulum (ER) three-way tubular junctions, which represent crossing-points at which the tubules build a polygonal network.</text>
</comment>
<comment type="alternative products">
    <event type="alternative splicing"/>
    <isoform>
        <id>Q5R891-1</id>
        <name>1</name>
        <sequence type="displayed"/>
    </isoform>
    <isoform>
        <id>Q5R891-2</id>
        <name>2</name>
        <sequence type="described" ref="VSP_020240"/>
    </isoform>
</comment>
<comment type="domain">
    <text evidence="2">The transmembrane domain 1 and 2 function as a signal-anchor and stop-transfer sequence, respectively, generating a double-spanning integral membrane protein with a N- and C-terminal cytoplasmic orientation. Transmembrane domain 1 and 2 are probably sufficient to mediate membrane translocation and topology formation in a N-myristoylation-independent manner. Transmembrane domain 2 is sufficient to block the protein secretion pathway. The two coiled-coil domains are necessary for its endoplasmic reticulum (ER) three-way tubular junction localization. The C4-type zinc finger motif is necessary both for its ER three-way tubular junction localization and formation.</text>
</comment>
<comment type="PTM">
    <text evidence="2">Myristoylated; myristoylation is necessary for the endoplasmic reticulum (ER) three-way ER tubular junction formation, but is not required neither for membrane translocation, membrane topology formation, nor for the specific localization to ER membranes.</text>
</comment>
<comment type="PTM">
    <text evidence="2">Phosphorylated. Phosphorylation occurs at Ser-177, Ser-182, Ser-217, Ser-227, Ser-321 and Ser-384 during interphase. Phosphorylation occurs at Ser-114, Ser-153, Ser-194, Thr-211 and Ser-353 during mitosis; these phosphorylations reduce both its homodimerization and the ER three-way tubular junction formation.</text>
</comment>
<comment type="PTM">
    <text evidence="2">Subject to proteasomal degradation following phosphorylation during mitosis.</text>
</comment>
<comment type="similarity">
    <text evidence="6">Belongs to the lunapark family.</text>
</comment>
<name>LNP_PONAB</name>
<keyword id="KW-0025">Alternative splicing</keyword>
<keyword id="KW-0175">Coiled coil</keyword>
<keyword id="KW-0217">Developmental protein</keyword>
<keyword id="KW-0256">Endoplasmic reticulum</keyword>
<keyword id="KW-0449">Lipoprotein</keyword>
<keyword id="KW-0472">Membrane</keyword>
<keyword id="KW-0479">Metal-binding</keyword>
<keyword id="KW-0519">Myristate</keyword>
<keyword id="KW-0597">Phosphoprotein</keyword>
<keyword id="KW-1185">Reference proteome</keyword>
<keyword id="KW-0812">Transmembrane</keyword>
<keyword id="KW-1133">Transmembrane helix</keyword>
<keyword id="KW-0862">Zinc</keyword>
<keyword id="KW-0863">Zinc-finger</keyword>